<keyword id="KW-0963">Cytoplasm</keyword>
<keyword id="KW-0396">Initiation factor</keyword>
<keyword id="KW-0648">Protein biosynthesis</keyword>
<keyword id="KW-1185">Reference proteome</keyword>
<keyword id="KW-0677">Repeat</keyword>
<keyword id="KW-0694">RNA-binding</keyword>
<keyword id="KW-0853">WD repeat</keyword>
<gene>
    <name evidence="1" type="primary">eIF3-S9</name>
</gene>
<name>EIF3B_BOMMO</name>
<proteinExistence type="evidence at transcript level"/>
<protein>
    <recommendedName>
        <fullName evidence="1">Eukaryotic translation initiation factor 3 subunit B</fullName>
        <shortName evidence="1">eIF3b</shortName>
    </recommendedName>
    <alternativeName>
        <fullName evidence="1">Eukaryotic translation initiation factor 3 subunit 9</fullName>
    </alternativeName>
</protein>
<feature type="chain" id="PRO_0000363792" description="Eukaryotic translation initiation factor 3 subunit B">
    <location>
        <begin position="1"/>
        <end position="695"/>
    </location>
</feature>
<feature type="domain" description="RRM" evidence="1">
    <location>
        <begin position="60"/>
        <end position="144"/>
    </location>
</feature>
<feature type="repeat" description="WD 1">
    <location>
        <begin position="164"/>
        <end position="205"/>
    </location>
</feature>
<feature type="repeat" description="WD 2">
    <location>
        <begin position="295"/>
        <end position="335"/>
    </location>
</feature>
<feature type="repeat" description="WD 3">
    <location>
        <begin position="338"/>
        <end position="373"/>
    </location>
</feature>
<feature type="repeat" description="WD 4">
    <location>
        <begin position="444"/>
        <end position="486"/>
    </location>
</feature>
<feature type="region of interest" description="Disordered" evidence="2">
    <location>
        <begin position="1"/>
        <end position="43"/>
    </location>
</feature>
<feature type="compositionally biased region" description="Basic and acidic residues" evidence="2">
    <location>
        <begin position="1"/>
        <end position="10"/>
    </location>
</feature>
<feature type="compositionally biased region" description="Acidic residues" evidence="2">
    <location>
        <begin position="17"/>
        <end position="43"/>
    </location>
</feature>
<reference key="1">
    <citation type="submission" date="2006-04" db="EMBL/GenBank/DDBJ databases">
        <title>RNA binding proteins in Bombyx mori.</title>
        <authorList>
            <person name="Wang L.-L."/>
            <person name="Chen K.-P."/>
            <person name="Yao Q."/>
            <person name="Hu Z.-G."/>
            <person name="Gao G.-T."/>
        </authorList>
    </citation>
    <scope>NUCLEOTIDE SEQUENCE [MRNA]</scope>
</reference>
<comment type="function">
    <text evidence="1">RNA-binding component of the eukaryotic translation initiation factor 3 (eIF-3) complex, which is involved in protein synthesis of a specialized repertoire of mRNAs and, together with other initiation factors, stimulates binding of mRNA and methionyl-tRNAi to the 40S ribosome. The eIF-3 complex specifically targets and initiates translation of a subset of mRNAs involved in cell proliferation.</text>
</comment>
<comment type="subunit">
    <text evidence="1">Component of the eukaryotic translation initiation factor 3 (eIF-3) complex.</text>
</comment>
<comment type="subcellular location">
    <subcellularLocation>
        <location evidence="1">Cytoplasm</location>
    </subcellularLocation>
</comment>
<comment type="similarity">
    <text evidence="1">Belongs to the eIF-3 subunit B family.</text>
</comment>
<accession>Q1HDZ5</accession>
<organism>
    <name type="scientific">Bombyx mori</name>
    <name type="common">Silk moth</name>
    <dbReference type="NCBI Taxonomy" id="7091"/>
    <lineage>
        <taxon>Eukaryota</taxon>
        <taxon>Metazoa</taxon>
        <taxon>Ecdysozoa</taxon>
        <taxon>Arthropoda</taxon>
        <taxon>Hexapoda</taxon>
        <taxon>Insecta</taxon>
        <taxon>Pterygota</taxon>
        <taxon>Neoptera</taxon>
        <taxon>Endopterygota</taxon>
        <taxon>Lepidoptera</taxon>
        <taxon>Glossata</taxon>
        <taxon>Ditrysia</taxon>
        <taxon>Bombycoidea</taxon>
        <taxon>Bombycidae</taxon>
        <taxon>Bombycinae</taxon>
        <taxon>Bombyx</taxon>
    </lineage>
</organism>
<evidence type="ECO:0000255" key="1">
    <source>
        <dbReference type="HAMAP-Rule" id="MF_03001"/>
    </source>
</evidence>
<evidence type="ECO:0000256" key="2">
    <source>
        <dbReference type="SAM" id="MobiDB-lite"/>
    </source>
</evidence>
<sequence length="695" mass="80615">MAKKKGDEKANPAPQSDNEEQNFEEEPDFDDPEDFVEIPEEELLADILEQKPKESDGYENVVVVDGCPQVGPERLEKLQSVINKIFSKFGKIVNEYYPTTENGLTTGYIFLEYSNPQNAAEAVKATNNCKLDKQHTFLVNLFTDFQKYSDIPKEWEPPAPQPFKVQSDLQWYLMDPDAYDQFLVGIGTGVALQVWQNALPEPLLLQERPNWTETYAVWSPLGTYLATFHWRGVALWAGPKFSQFQKFFHPEARFISFSPCENYMVTFSPSGDRGDDKKWIIGDIRTGQEKRSFPPPDEYVTWPIFRWSKDDRFFARIGADVLSVYETPGFGLLDKKSIKIPGIRDFSWSPSDNTLAYWVAEDKDVPARVTLLEIPNRTEVRSKNLFSVADCKIHWQKSGDYLCVKVDRYSKVKKDKIDIKYSGMYYNFEIFHMREKEIPVDSVEIKEPIQAFAWEPVGSKFSIIHGDPANISISFYQVNTGQAPTLLKKFERKPFNHLFWSPSGQFIVLANLGLTGGALEFLDTNDFTIMNVADHYQMSGIEWDPTGRYVVTGVSSLKCKMDCGYYIWSFQGKILRRVMKEGFAQFHWRPRPPTLLSEKQQKEIKKNLKKYYSQFESKDRMRSSKASKELVAKRTEQMKKFTEYRESKIQEWNEQKPRRLELRDYVDTDGLDTDAVNTVEEVIEFFVKEEQTVIE</sequence>
<dbReference type="EMBL" id="DQ497202">
    <property type="protein sequence ID" value="ABF55967.1"/>
    <property type="molecule type" value="mRNA"/>
</dbReference>
<dbReference type="RefSeq" id="NP_001037602.1">
    <property type="nucleotide sequence ID" value="NM_001044137.1"/>
</dbReference>
<dbReference type="SMR" id="Q1HDZ5"/>
<dbReference type="FunCoup" id="Q1HDZ5">
    <property type="interactions" value="2168"/>
</dbReference>
<dbReference type="STRING" id="7091.Q1HDZ5"/>
<dbReference type="PaxDb" id="7091-BGIBMGA007114-TA"/>
<dbReference type="EnsemblMetazoa" id="NM_001044137.1">
    <property type="protein sequence ID" value="NP_001037602.1"/>
    <property type="gene ID" value="GeneID_733052"/>
</dbReference>
<dbReference type="GeneID" id="733052"/>
<dbReference type="KEGG" id="bmor:733052"/>
<dbReference type="CTD" id="8662"/>
<dbReference type="eggNOG" id="KOG2314">
    <property type="taxonomic scope" value="Eukaryota"/>
</dbReference>
<dbReference type="HOGENOM" id="CLU_011152_1_0_1"/>
<dbReference type="InParanoid" id="Q1HDZ5"/>
<dbReference type="OrthoDB" id="247781at7088"/>
<dbReference type="Proteomes" id="UP000005204">
    <property type="component" value="Unassembled WGS sequence"/>
</dbReference>
<dbReference type="GO" id="GO:0016282">
    <property type="term" value="C:eukaryotic 43S preinitiation complex"/>
    <property type="evidence" value="ECO:0007669"/>
    <property type="project" value="UniProtKB-UniRule"/>
</dbReference>
<dbReference type="GO" id="GO:0033290">
    <property type="term" value="C:eukaryotic 48S preinitiation complex"/>
    <property type="evidence" value="ECO:0007669"/>
    <property type="project" value="UniProtKB-UniRule"/>
</dbReference>
<dbReference type="GO" id="GO:0005852">
    <property type="term" value="C:eukaryotic translation initiation factor 3 complex"/>
    <property type="evidence" value="ECO:0000250"/>
    <property type="project" value="UniProtKB"/>
</dbReference>
<dbReference type="GO" id="GO:0003723">
    <property type="term" value="F:RNA binding"/>
    <property type="evidence" value="ECO:0007669"/>
    <property type="project" value="UniProtKB-UniRule"/>
</dbReference>
<dbReference type="GO" id="GO:0003743">
    <property type="term" value="F:translation initiation factor activity"/>
    <property type="evidence" value="ECO:0000250"/>
    <property type="project" value="UniProtKB"/>
</dbReference>
<dbReference type="GO" id="GO:0031369">
    <property type="term" value="F:translation initiation factor binding"/>
    <property type="evidence" value="ECO:0007669"/>
    <property type="project" value="InterPro"/>
</dbReference>
<dbReference type="GO" id="GO:0001732">
    <property type="term" value="P:formation of cytoplasmic translation initiation complex"/>
    <property type="evidence" value="ECO:0007669"/>
    <property type="project" value="UniProtKB-UniRule"/>
</dbReference>
<dbReference type="GO" id="GO:0006446">
    <property type="term" value="P:regulation of translational initiation"/>
    <property type="evidence" value="ECO:0000250"/>
    <property type="project" value="UniProtKB"/>
</dbReference>
<dbReference type="CDD" id="cd12278">
    <property type="entry name" value="RRM_eIF3B"/>
    <property type="match status" value="1"/>
</dbReference>
<dbReference type="FunFam" id="2.130.10.10:FF:001060">
    <property type="entry name" value="Eukaryotic translation initiation factor 3 subunit B"/>
    <property type="match status" value="1"/>
</dbReference>
<dbReference type="FunFam" id="3.30.70.330:FF:000607">
    <property type="entry name" value="Eukaryotic translation initiation factor 3 subunit B"/>
    <property type="match status" value="1"/>
</dbReference>
<dbReference type="Gene3D" id="3.30.70.330">
    <property type="match status" value="1"/>
</dbReference>
<dbReference type="Gene3D" id="2.130.10.10">
    <property type="entry name" value="YVTN repeat-like/Quinoprotein amine dehydrogenase"/>
    <property type="match status" value="2"/>
</dbReference>
<dbReference type="HAMAP" id="MF_03001">
    <property type="entry name" value="eIF3b"/>
    <property type="match status" value="1"/>
</dbReference>
<dbReference type="InterPro" id="IPR011400">
    <property type="entry name" value="EIF3B"/>
</dbReference>
<dbReference type="InterPro" id="IPR034363">
    <property type="entry name" value="eIF3B_RRM"/>
</dbReference>
<dbReference type="InterPro" id="IPR012677">
    <property type="entry name" value="Nucleotide-bd_a/b_plait_sf"/>
</dbReference>
<dbReference type="InterPro" id="IPR035979">
    <property type="entry name" value="RBD_domain_sf"/>
</dbReference>
<dbReference type="InterPro" id="IPR000504">
    <property type="entry name" value="RRM_dom"/>
</dbReference>
<dbReference type="InterPro" id="IPR013979">
    <property type="entry name" value="TIF_beta_prop-like"/>
</dbReference>
<dbReference type="InterPro" id="IPR015943">
    <property type="entry name" value="WD40/YVTN_repeat-like_dom_sf"/>
</dbReference>
<dbReference type="PANTHER" id="PTHR14068">
    <property type="entry name" value="EUKARYOTIC TRANSLATION INITIATION FACTOR 3 EIF3 -RELATED"/>
    <property type="match status" value="1"/>
</dbReference>
<dbReference type="PANTHER" id="PTHR14068:SF0">
    <property type="entry name" value="EUKARYOTIC TRANSLATION INITIATION FACTOR 3 SUBUNIT B"/>
    <property type="match status" value="1"/>
</dbReference>
<dbReference type="Pfam" id="PF08662">
    <property type="entry name" value="eIF2A"/>
    <property type="match status" value="1"/>
</dbReference>
<dbReference type="Pfam" id="PF00076">
    <property type="entry name" value="RRM_1"/>
    <property type="match status" value="1"/>
</dbReference>
<dbReference type="PIRSF" id="PIRSF036424">
    <property type="entry name" value="eIF3b"/>
    <property type="match status" value="1"/>
</dbReference>
<dbReference type="SMART" id="SM00360">
    <property type="entry name" value="RRM"/>
    <property type="match status" value="1"/>
</dbReference>
<dbReference type="SUPFAM" id="SSF82171">
    <property type="entry name" value="DPP6 N-terminal domain-like"/>
    <property type="match status" value="1"/>
</dbReference>
<dbReference type="SUPFAM" id="SSF54928">
    <property type="entry name" value="RNA-binding domain, RBD"/>
    <property type="match status" value="1"/>
</dbReference>
<dbReference type="PROSITE" id="PS50102">
    <property type="entry name" value="RRM"/>
    <property type="match status" value="1"/>
</dbReference>